<sequence>MACSAMTKLALVVALCMVVSVPIAQALTCGQVSSNLAPCIAYVRGGGAVPPACCNGIRNINNLAKTTADRQTACNCLKQLSASVPGVNANNAAALPGKCGVNVPYKISPSTNCATVK</sequence>
<feature type="signal peptide" evidence="2">
    <location>
        <begin position="1"/>
        <end position="26"/>
    </location>
</feature>
<feature type="chain" id="PRO_0000018401" description="Non-specific lipid-transfer protein">
    <location>
        <begin position="27"/>
        <end position="117"/>
    </location>
</feature>
<feature type="disulfide bond" evidence="1">
    <location>
        <begin position="29"/>
        <end position="76"/>
    </location>
</feature>
<feature type="disulfide bond" evidence="1">
    <location>
        <begin position="39"/>
        <end position="53"/>
    </location>
</feature>
<feature type="disulfide bond" evidence="1">
    <location>
        <begin position="54"/>
        <end position="99"/>
    </location>
</feature>
<feature type="disulfide bond" evidence="1">
    <location>
        <begin position="74"/>
        <end position="113"/>
    </location>
</feature>
<dbReference type="EMBL" id="AF221501">
    <property type="protein sequence ID" value="AAF26449.1"/>
    <property type="molecule type" value="mRNA"/>
</dbReference>
<dbReference type="SMR" id="Q9M5X8"/>
<dbReference type="Allergome" id="3449">
    <property type="allergen name" value="Pru av 3.0101"/>
</dbReference>
<dbReference type="Allergome" id="599">
    <property type="allergen name" value="Pru av 3"/>
</dbReference>
<dbReference type="Proteomes" id="UP000515124">
    <property type="component" value="Unplaced"/>
</dbReference>
<dbReference type="GO" id="GO:0008289">
    <property type="term" value="F:lipid binding"/>
    <property type="evidence" value="ECO:0007669"/>
    <property type="project" value="UniProtKB-KW"/>
</dbReference>
<dbReference type="GO" id="GO:0006869">
    <property type="term" value="P:lipid transport"/>
    <property type="evidence" value="ECO:0007669"/>
    <property type="project" value="InterPro"/>
</dbReference>
<dbReference type="CDD" id="cd01960">
    <property type="entry name" value="nsLTP1"/>
    <property type="match status" value="1"/>
</dbReference>
<dbReference type="FunFam" id="1.10.110.10:FF:000002">
    <property type="entry name" value="Non-specific lipid-transfer protein"/>
    <property type="match status" value="1"/>
</dbReference>
<dbReference type="Gene3D" id="1.10.110.10">
    <property type="entry name" value="Plant lipid-transfer and hydrophobic proteins"/>
    <property type="match status" value="1"/>
</dbReference>
<dbReference type="InterPro" id="IPR036312">
    <property type="entry name" value="Bifun_inhib/LTP/seed_sf"/>
</dbReference>
<dbReference type="InterPro" id="IPR016140">
    <property type="entry name" value="Bifunc_inhib/LTP/seed_store"/>
</dbReference>
<dbReference type="InterPro" id="IPR000528">
    <property type="entry name" value="Plant_nsLTP"/>
</dbReference>
<dbReference type="PANTHER" id="PTHR33076">
    <property type="entry name" value="NON-SPECIFIC LIPID-TRANSFER PROTEIN 2-RELATED"/>
    <property type="match status" value="1"/>
</dbReference>
<dbReference type="Pfam" id="PF00234">
    <property type="entry name" value="Tryp_alpha_amyl"/>
    <property type="match status" value="1"/>
</dbReference>
<dbReference type="PRINTS" id="PR00382">
    <property type="entry name" value="LIPIDTRNSFER"/>
</dbReference>
<dbReference type="SMART" id="SM00499">
    <property type="entry name" value="AAI"/>
    <property type="match status" value="1"/>
</dbReference>
<dbReference type="SUPFAM" id="SSF47699">
    <property type="entry name" value="Bifunctional inhibitor/lipid-transfer protein/seed storage 2S albumin"/>
    <property type="match status" value="1"/>
</dbReference>
<dbReference type="PROSITE" id="PS00597">
    <property type="entry name" value="PLANT_LTP"/>
    <property type="match status" value="1"/>
</dbReference>
<organism>
    <name type="scientific">Prunus avium</name>
    <name type="common">Cherry</name>
    <name type="synonym">Cerasus avium</name>
    <dbReference type="NCBI Taxonomy" id="42229"/>
    <lineage>
        <taxon>Eukaryota</taxon>
        <taxon>Viridiplantae</taxon>
        <taxon>Streptophyta</taxon>
        <taxon>Embryophyta</taxon>
        <taxon>Tracheophyta</taxon>
        <taxon>Spermatophyta</taxon>
        <taxon>Magnoliopsida</taxon>
        <taxon>eudicotyledons</taxon>
        <taxon>Gunneridae</taxon>
        <taxon>Pentapetalae</taxon>
        <taxon>rosids</taxon>
        <taxon>fabids</taxon>
        <taxon>Rosales</taxon>
        <taxon>Rosaceae</taxon>
        <taxon>Amygdaloideae</taxon>
        <taxon>Amygdaleae</taxon>
        <taxon>Prunus</taxon>
    </lineage>
</organism>
<comment type="function">
    <text evidence="1">Plant non-specific lipid-transfer proteins transfer phospholipids as well as galactolipids across membranes. May play a role in wax or cutin deposition in the cell walls of expanding epidermal cells and certain secretory tissues (By similarity).</text>
</comment>
<comment type="allergen">
    <text>Causes an allergic reaction in human.</text>
</comment>
<comment type="similarity">
    <text evidence="3">Belongs to the plant LTP family.</text>
</comment>
<accession>Q9M5X8</accession>
<keyword id="KW-0020">Allergen</keyword>
<keyword id="KW-1015">Disulfide bond</keyword>
<keyword id="KW-0446">Lipid-binding</keyword>
<keyword id="KW-1185">Reference proteome</keyword>
<keyword id="KW-0732">Signal</keyword>
<keyword id="KW-0813">Transport</keyword>
<name>NLTP_PRUAV</name>
<proteinExistence type="evidence at protein level"/>
<reference key="1">
    <citation type="submission" date="2000-01" db="EMBL/GenBank/DDBJ databases">
        <title>Cloning of a cDNA encoding a lipid transfer protein as a potential allergen from Prunus avium.</title>
        <authorList>
            <person name="Scheurer S."/>
            <person name="Wangorsch A."/>
            <person name="Haustein D."/>
            <person name="Vieths S."/>
        </authorList>
    </citation>
    <scope>NUCLEOTIDE SEQUENCE [MRNA]</scope>
</reference>
<evidence type="ECO:0000250" key="1"/>
<evidence type="ECO:0000255" key="2"/>
<evidence type="ECO:0000305" key="3"/>
<protein>
    <recommendedName>
        <fullName>Non-specific lipid-transfer protein</fullName>
        <shortName>LTP</shortName>
    </recommendedName>
    <allergenName>Pru av 3</allergenName>
</protein>